<name>MATK_SORBI</name>
<protein>
    <recommendedName>
        <fullName evidence="2">Maturase K</fullName>
    </recommendedName>
    <alternativeName>
        <fullName evidence="2">Intron maturase</fullName>
    </alternativeName>
</protein>
<organism>
    <name type="scientific">Sorghum bicolor</name>
    <name type="common">Sorghum</name>
    <name type="synonym">Sorghum vulgare</name>
    <dbReference type="NCBI Taxonomy" id="4558"/>
    <lineage>
        <taxon>Eukaryota</taxon>
        <taxon>Viridiplantae</taxon>
        <taxon>Streptophyta</taxon>
        <taxon>Embryophyta</taxon>
        <taxon>Tracheophyta</taxon>
        <taxon>Spermatophyta</taxon>
        <taxon>Magnoliopsida</taxon>
        <taxon>Liliopsida</taxon>
        <taxon>Poales</taxon>
        <taxon>Poaceae</taxon>
        <taxon>PACMAD clade</taxon>
        <taxon>Panicoideae</taxon>
        <taxon>Andropogonodae</taxon>
        <taxon>Andropogoneae</taxon>
        <taxon>Sorghinae</taxon>
        <taxon>Sorghum</taxon>
    </lineage>
</organism>
<dbReference type="EMBL" id="AF164418">
    <property type="protein sequence ID" value="AAF66205.1"/>
    <property type="status" value="ALT_SEQ"/>
    <property type="molecule type" value="Genomic_DNA"/>
</dbReference>
<dbReference type="EMBL" id="EF115542">
    <property type="protein sequence ID" value="ABK79477.1"/>
    <property type="status" value="ALT_SEQ"/>
    <property type="molecule type" value="Genomic_DNA"/>
</dbReference>
<dbReference type="RefSeq" id="YP_899388.1">
    <property type="nucleotide sequence ID" value="NC_008602.1"/>
</dbReference>
<dbReference type="FunCoup" id="Q9MUX3">
    <property type="interactions" value="1"/>
</dbReference>
<dbReference type="STRING" id="4558.Q9MUX3"/>
<dbReference type="GeneID" id="4549138"/>
<dbReference type="KEGG" id="sbi:4549138"/>
<dbReference type="InParanoid" id="Q9MUX3"/>
<dbReference type="OrthoDB" id="597045at2759"/>
<dbReference type="Proteomes" id="UP000000768">
    <property type="component" value="Chloroplast"/>
</dbReference>
<dbReference type="GO" id="GO:0009507">
    <property type="term" value="C:chloroplast"/>
    <property type="evidence" value="ECO:0007669"/>
    <property type="project" value="UniProtKB-SubCell"/>
</dbReference>
<dbReference type="GO" id="GO:0003723">
    <property type="term" value="F:RNA binding"/>
    <property type="evidence" value="ECO:0007669"/>
    <property type="project" value="UniProtKB-KW"/>
</dbReference>
<dbReference type="GO" id="GO:0006397">
    <property type="term" value="P:mRNA processing"/>
    <property type="evidence" value="ECO:0007669"/>
    <property type="project" value="UniProtKB-KW"/>
</dbReference>
<dbReference type="GO" id="GO:0008380">
    <property type="term" value="P:RNA splicing"/>
    <property type="evidence" value="ECO:0007669"/>
    <property type="project" value="UniProtKB-UniRule"/>
</dbReference>
<dbReference type="GO" id="GO:0008033">
    <property type="term" value="P:tRNA processing"/>
    <property type="evidence" value="ECO:0007669"/>
    <property type="project" value="UniProtKB-KW"/>
</dbReference>
<dbReference type="HAMAP" id="MF_01390">
    <property type="entry name" value="MatK"/>
    <property type="match status" value="1"/>
</dbReference>
<dbReference type="InterPro" id="IPR024937">
    <property type="entry name" value="Domain_X"/>
</dbReference>
<dbReference type="InterPro" id="IPR002866">
    <property type="entry name" value="Maturase_MatK"/>
</dbReference>
<dbReference type="InterPro" id="IPR024942">
    <property type="entry name" value="Maturase_MatK_N"/>
</dbReference>
<dbReference type="PANTHER" id="PTHR34811">
    <property type="entry name" value="MATURASE K"/>
    <property type="match status" value="1"/>
</dbReference>
<dbReference type="PANTHER" id="PTHR34811:SF1">
    <property type="entry name" value="MATURASE K"/>
    <property type="match status" value="1"/>
</dbReference>
<dbReference type="Pfam" id="PF01348">
    <property type="entry name" value="Intron_maturas2"/>
    <property type="match status" value="1"/>
</dbReference>
<dbReference type="Pfam" id="PF01824">
    <property type="entry name" value="MatK_N"/>
    <property type="match status" value="1"/>
</dbReference>
<keyword id="KW-0150">Chloroplast</keyword>
<keyword id="KW-0507">mRNA processing</keyword>
<keyword id="KW-0934">Plastid</keyword>
<keyword id="KW-1185">Reference proteome</keyword>
<keyword id="KW-0691">RNA editing</keyword>
<keyword id="KW-0694">RNA-binding</keyword>
<keyword id="KW-0819">tRNA processing</keyword>
<feature type="chain" id="PRO_0000143714" description="Maturase K">
    <location>
        <begin position="1"/>
        <end position="515"/>
    </location>
</feature>
<feature type="sequence conflict" description="In Ref. 1; AAF66205." evidence="3" ref="1">
    <original>W</original>
    <variation>L</variation>
    <location>
        <position position="71"/>
    </location>
</feature>
<feature type="sequence conflict" description="In Ref. 1; AAF66205." evidence="3" ref="1">
    <original>LK</original>
    <variation>FS</variation>
    <location>
        <begin position="204"/>
        <end position="205"/>
    </location>
</feature>
<feature type="sequence conflict" description="In Ref. 1; AAF66205." evidence="3" ref="1">
    <original>Q</original>
    <variation>R</variation>
    <location>
        <position position="427"/>
    </location>
</feature>
<feature type="sequence conflict" description="In Ref. 1; AAF66205." evidence="3" ref="1">
    <original>L</original>
    <variation>S</variation>
    <location>
        <position position="461"/>
    </location>
</feature>
<evidence type="ECO:0000250" key="1"/>
<evidence type="ECO:0000255" key="2">
    <source>
        <dbReference type="HAMAP-Rule" id="MF_01390"/>
    </source>
</evidence>
<evidence type="ECO:0000305" key="3"/>
<accession>Q9MUX3</accession>
<accession>A1E9Q5</accession>
<geneLocation type="chloroplast"/>
<sequence>MEKFEGYSEKQKSRQHYFVYPLLFQEYIYAFAHDYGLNGSEPVEIFGCNNKKFSSILVKRLIIRMYQQNFWINSVNYPNQDRLFDHRNYFYSEFYSQILSEGFGIVVEIPLSLGQLSCPEEKEIPKFQNLQSIHSIFPFLEDKFLHLHYLSHIEIPYPIHLEILVQLLEYRIQDVPSLHLLRFFLHYYSNWNSLITSMKSIFLLKKENKRLFRFLYNSYVSEYEFFLLFLRKQSSCLRLTSSGTFLERIIFSGKMEHFGVMYPGFFRKTIWFFMDPLMHYVRYQGKAILASKGTLLLKKKWKSYLVNFSQYFFSFWTQPQRIRLNQLTNSCFDFLGYLSSVPINTLLVRNQMLENSFLIDTRMKKFDTTVPATPLVGSLSKAQFCTGSGHPISKPVWTDLSDWDILDRFGRICRNLFHYYSGSSKKQTLYRLKYILRLSCARTLARKHKSTVRTFMQRLGLVFLEEFFTEEEQVFSLMFTKTKTIHFSFHGSQSERIWYLDIIRINDLVNPLTLN</sequence>
<gene>
    <name evidence="2" type="primary">matK</name>
</gene>
<comment type="function">
    <text evidence="2">Usually encoded in the trnK tRNA gene intron. Probably assists in splicing its own and other chloroplast group II introns.</text>
</comment>
<comment type="subcellular location">
    <subcellularLocation>
        <location>Plastid</location>
        <location>Chloroplast</location>
    </subcellularLocation>
</comment>
<comment type="RNA editing">
    <location>
        <position position="420" evidence="1"/>
    </location>
</comment>
<comment type="similarity">
    <text evidence="2">Belongs to the intron maturase 2 family. MatK subfamily.</text>
</comment>
<reference key="1">
    <citation type="journal article" date="1999" name="Ann. Mo. Bot. Gard.">
        <title>Phylogeny of Poaceae inferred from matK sequences.</title>
        <authorList>
            <person name="Hilu K.W."/>
            <person name="Alice L.A."/>
            <person name="Liang H."/>
        </authorList>
    </citation>
    <scope>NUCLEOTIDE SEQUENCE [GENOMIC DNA]</scope>
</reference>
<reference key="2">
    <citation type="journal article" date="2007" name="Theor. Appl. Genet.">
        <title>Complete chloroplast genome sequences of Hordeum vulgare, Sorghum bicolor and Agrostis stolonifera, and comparative analyses with other grass genomes.</title>
        <authorList>
            <person name="Saski C."/>
            <person name="Lee S.-B."/>
            <person name="Fjellheim S."/>
            <person name="Guda C."/>
            <person name="Jansen R.K."/>
            <person name="Luo H."/>
            <person name="Tomkins J."/>
            <person name="Rognli O.A."/>
            <person name="Daniell H."/>
            <person name="Clarke J.L."/>
        </authorList>
    </citation>
    <scope>NUCLEOTIDE SEQUENCE [LARGE SCALE GENOMIC DNA]</scope>
    <source>
        <strain>cv. BTx623</strain>
    </source>
</reference>
<proteinExistence type="inferred from homology"/>